<protein>
    <recommendedName>
        <fullName evidence="1">Imidazoleglycerol-phosphate dehydratase</fullName>
        <shortName evidence="1">IGPD</shortName>
        <ecNumber evidence="1">4.2.1.19</ecNumber>
    </recommendedName>
</protein>
<evidence type="ECO:0000255" key="1">
    <source>
        <dbReference type="HAMAP-Rule" id="MF_00076"/>
    </source>
</evidence>
<reference key="1">
    <citation type="submission" date="2009-07" db="EMBL/GenBank/DDBJ databases">
        <title>Complete sequence of Geobacter sp. M21.</title>
        <authorList>
            <consortium name="US DOE Joint Genome Institute"/>
            <person name="Lucas S."/>
            <person name="Copeland A."/>
            <person name="Lapidus A."/>
            <person name="Glavina del Rio T."/>
            <person name="Dalin E."/>
            <person name="Tice H."/>
            <person name="Bruce D."/>
            <person name="Goodwin L."/>
            <person name="Pitluck S."/>
            <person name="Saunders E."/>
            <person name="Brettin T."/>
            <person name="Detter J.C."/>
            <person name="Han C."/>
            <person name="Larimer F."/>
            <person name="Land M."/>
            <person name="Hauser L."/>
            <person name="Kyrpides N."/>
            <person name="Ovchinnikova G."/>
            <person name="Lovley D."/>
        </authorList>
    </citation>
    <scope>NUCLEOTIDE SEQUENCE [LARGE SCALE GENOMIC DNA]</scope>
    <source>
        <strain>M21</strain>
    </source>
</reference>
<keyword id="KW-0028">Amino-acid biosynthesis</keyword>
<keyword id="KW-0963">Cytoplasm</keyword>
<keyword id="KW-0368">Histidine biosynthesis</keyword>
<keyword id="KW-0456">Lyase</keyword>
<feature type="chain" id="PRO_1000202513" description="Imidazoleglycerol-phosphate dehydratase">
    <location>
        <begin position="1"/>
        <end position="195"/>
    </location>
</feature>
<dbReference type="EC" id="4.2.1.19" evidence="1"/>
<dbReference type="EMBL" id="CP001661">
    <property type="protein sequence ID" value="ACT19817.1"/>
    <property type="molecule type" value="Genomic_DNA"/>
</dbReference>
<dbReference type="SMR" id="C6E7F7"/>
<dbReference type="STRING" id="443144.GM21_3798"/>
<dbReference type="KEGG" id="gem:GM21_3798"/>
<dbReference type="eggNOG" id="COG0131">
    <property type="taxonomic scope" value="Bacteria"/>
</dbReference>
<dbReference type="HOGENOM" id="CLU_044308_2_0_7"/>
<dbReference type="OrthoDB" id="9790411at2"/>
<dbReference type="UniPathway" id="UPA00031">
    <property type="reaction ID" value="UER00011"/>
</dbReference>
<dbReference type="GO" id="GO:0005737">
    <property type="term" value="C:cytoplasm"/>
    <property type="evidence" value="ECO:0007669"/>
    <property type="project" value="UniProtKB-SubCell"/>
</dbReference>
<dbReference type="GO" id="GO:0004424">
    <property type="term" value="F:imidazoleglycerol-phosphate dehydratase activity"/>
    <property type="evidence" value="ECO:0007669"/>
    <property type="project" value="UniProtKB-UniRule"/>
</dbReference>
<dbReference type="GO" id="GO:0000105">
    <property type="term" value="P:L-histidine biosynthetic process"/>
    <property type="evidence" value="ECO:0007669"/>
    <property type="project" value="UniProtKB-UniRule"/>
</dbReference>
<dbReference type="CDD" id="cd07914">
    <property type="entry name" value="IGPD"/>
    <property type="match status" value="1"/>
</dbReference>
<dbReference type="FunFam" id="3.30.230.40:FF:000001">
    <property type="entry name" value="Imidazoleglycerol-phosphate dehydratase HisB"/>
    <property type="match status" value="1"/>
</dbReference>
<dbReference type="FunFam" id="3.30.230.40:FF:000003">
    <property type="entry name" value="Imidazoleglycerol-phosphate dehydratase HisB"/>
    <property type="match status" value="1"/>
</dbReference>
<dbReference type="Gene3D" id="3.30.230.40">
    <property type="entry name" value="Imidazole glycerol phosphate dehydratase, domain 1"/>
    <property type="match status" value="2"/>
</dbReference>
<dbReference type="HAMAP" id="MF_00076">
    <property type="entry name" value="HisB"/>
    <property type="match status" value="1"/>
</dbReference>
<dbReference type="InterPro" id="IPR038494">
    <property type="entry name" value="IGPD_sf"/>
</dbReference>
<dbReference type="InterPro" id="IPR000807">
    <property type="entry name" value="ImidazoleglycerolP_deHydtase"/>
</dbReference>
<dbReference type="InterPro" id="IPR020565">
    <property type="entry name" value="ImidazoleglycerP_deHydtase_CS"/>
</dbReference>
<dbReference type="InterPro" id="IPR020568">
    <property type="entry name" value="Ribosomal_Su5_D2-typ_SF"/>
</dbReference>
<dbReference type="NCBIfam" id="NF002111">
    <property type="entry name" value="PRK00951.2-1"/>
    <property type="match status" value="1"/>
</dbReference>
<dbReference type="NCBIfam" id="NF002114">
    <property type="entry name" value="PRK00951.2-4"/>
    <property type="match status" value="1"/>
</dbReference>
<dbReference type="NCBIfam" id="NF002115">
    <property type="entry name" value="PRK00951.2-5"/>
    <property type="match status" value="1"/>
</dbReference>
<dbReference type="PANTHER" id="PTHR23133:SF2">
    <property type="entry name" value="IMIDAZOLEGLYCEROL-PHOSPHATE DEHYDRATASE"/>
    <property type="match status" value="1"/>
</dbReference>
<dbReference type="PANTHER" id="PTHR23133">
    <property type="entry name" value="IMIDAZOLEGLYCEROL-PHOSPHATE DEHYDRATASE HIS7"/>
    <property type="match status" value="1"/>
</dbReference>
<dbReference type="Pfam" id="PF00475">
    <property type="entry name" value="IGPD"/>
    <property type="match status" value="1"/>
</dbReference>
<dbReference type="SUPFAM" id="SSF54211">
    <property type="entry name" value="Ribosomal protein S5 domain 2-like"/>
    <property type="match status" value="2"/>
</dbReference>
<dbReference type="PROSITE" id="PS00954">
    <property type="entry name" value="IGP_DEHYDRATASE_1"/>
    <property type="match status" value="1"/>
</dbReference>
<dbReference type="PROSITE" id="PS00955">
    <property type="entry name" value="IGP_DEHYDRATASE_2"/>
    <property type="match status" value="1"/>
</dbReference>
<name>HIS7_GEOSM</name>
<proteinExistence type="inferred from homology"/>
<gene>
    <name evidence="1" type="primary">hisB</name>
    <name type="ordered locus">GM21_3798</name>
</gene>
<organism>
    <name type="scientific">Geobacter sp. (strain M21)</name>
    <dbReference type="NCBI Taxonomy" id="443144"/>
    <lineage>
        <taxon>Bacteria</taxon>
        <taxon>Pseudomonadati</taxon>
        <taxon>Thermodesulfobacteriota</taxon>
        <taxon>Desulfuromonadia</taxon>
        <taxon>Geobacterales</taxon>
        <taxon>Geobacteraceae</taxon>
        <taxon>Geobacter</taxon>
    </lineage>
</organism>
<comment type="catalytic activity">
    <reaction evidence="1">
        <text>D-erythro-1-(imidazol-4-yl)glycerol 3-phosphate = 3-(imidazol-4-yl)-2-oxopropyl phosphate + H2O</text>
        <dbReference type="Rhea" id="RHEA:11040"/>
        <dbReference type="ChEBI" id="CHEBI:15377"/>
        <dbReference type="ChEBI" id="CHEBI:57766"/>
        <dbReference type="ChEBI" id="CHEBI:58278"/>
        <dbReference type="EC" id="4.2.1.19"/>
    </reaction>
</comment>
<comment type="pathway">
    <text evidence="1">Amino-acid biosynthesis; L-histidine biosynthesis; L-histidine from 5-phospho-alpha-D-ribose 1-diphosphate: step 6/9.</text>
</comment>
<comment type="subcellular location">
    <subcellularLocation>
        <location evidence="1">Cytoplasm</location>
    </subcellularLocation>
</comment>
<comment type="similarity">
    <text evidence="1">Belongs to the imidazoleglycerol-phosphate dehydratase family.</text>
</comment>
<sequence length="195" mass="21478">MARSAAIERITKETQIKLSLEIDGKGEAQICTSVPFLDHMLDLFARHGLFDLKVEAHGDIDIDFHHTVEDIGIVLGAAFKEALGDKCGIRRYGNAVVPMDEVLASVATDLSGRPYLVYNVQLPKVKIGDFDVELVREFFQGFVNHCGANLHLNLMYGDNVHHIVEACFKAAARALDQATQLDARIEGVMSTKGKL</sequence>
<accession>C6E7F7</accession>